<reference key="1">
    <citation type="journal article" date="1996" name="Virology">
        <title>Analysis of 76 kb of the chlorella virus PBCV-1 330-kb genome: map positions 182 to 258.</title>
        <authorList>
            <person name="Kutish G.F."/>
            <person name="Li Y."/>
            <person name="Lu Z."/>
            <person name="Furuta M."/>
            <person name="Rock D.L."/>
            <person name="van Etten J.L."/>
        </authorList>
    </citation>
    <scope>NUCLEOTIDE SEQUENCE [LARGE SCALE GENOMIC DNA]</scope>
</reference>
<reference key="2">
    <citation type="journal article" date="2010" name="J. Virol.">
        <title>Microarray analysis of Paramecium bursaria chlorella virus 1 transcription.</title>
        <authorList>
            <person name="Yanai-Balser G.M."/>
            <person name="Duncan G.A."/>
            <person name="Eudy J.D."/>
            <person name="Wang D."/>
            <person name="Li X."/>
            <person name="Agarkova I.V."/>
            <person name="Dunigan D.D."/>
            <person name="Van Etten J.L."/>
        </authorList>
    </citation>
    <scope>INDUCTION</scope>
</reference>
<reference evidence="7" key="3">
    <citation type="journal article" date="2019" name="Nat. Commun.">
        <title>Near-atomic structure of a giant virus.</title>
        <authorList>
            <person name="Fang Q."/>
            <person name="Zhu D."/>
            <person name="Agarkova I."/>
            <person name="Adhikari J."/>
            <person name="Klose T."/>
            <person name="Liu Y."/>
            <person name="Chen Z."/>
            <person name="Sun Y."/>
            <person name="Gross M.L."/>
            <person name="Van Etten J.L."/>
            <person name="Zhang X."/>
            <person name="Rossmann M.G."/>
        </authorList>
    </citation>
    <scope>STRUCTURE BY ELECTRON MICROSCOPY (3.50 ANGSTROMS)</scope>
    <scope>DISULFIDE BOND</scope>
    <scope>FUNCTION</scope>
    <scope>SUBCELLULAR LOCATION</scope>
    <scope>INTERACTION WITH THE MAJOR CAPSID PROTEIN</scope>
</reference>
<gene>
    <name evidence="5" type="primary">A454L</name>
</gene>
<dbReference type="EMBL" id="JF411744">
    <property type="protein sequence ID" value="AAC96822.1"/>
    <property type="molecule type" value="Genomic_DNA"/>
</dbReference>
<dbReference type="PIR" id="T17957">
    <property type="entry name" value="T17957"/>
</dbReference>
<dbReference type="RefSeq" id="NP_048811.1">
    <property type="nucleotide sequence ID" value="NC_000852.5"/>
</dbReference>
<dbReference type="PDB" id="6NCL">
    <property type="method" value="EM"/>
    <property type="resolution" value="3.50 A"/>
    <property type="chains" value="a2/a3=1-289"/>
</dbReference>
<dbReference type="PDBsum" id="6NCL"/>
<dbReference type="EMDB" id="EMD-0436"/>
<dbReference type="SMR" id="Q98505"/>
<dbReference type="GeneID" id="918005"/>
<dbReference type="KEGG" id="vg:918005"/>
<dbReference type="OrthoDB" id="7113at10239"/>
<dbReference type="Proteomes" id="UP000000862">
    <property type="component" value="Genome"/>
</dbReference>
<dbReference type="GO" id="GO:0019028">
    <property type="term" value="C:viral capsid"/>
    <property type="evidence" value="ECO:0007669"/>
    <property type="project" value="UniProtKB-KW"/>
</dbReference>
<proteinExistence type="evidence at protein level"/>
<feature type="chain" id="PRO_0000460576" description="Minor capsid protein P10">
    <location>
        <begin position="1"/>
        <end position="289"/>
    </location>
</feature>
<feature type="region of interest" description="Hydrophobic" evidence="3">
    <location>
        <begin position="1"/>
        <end position="21"/>
    </location>
</feature>
<feature type="disulfide bond" description="Interchain" evidence="2">
    <location>
        <position position="215"/>
    </location>
</feature>
<organismHost>
    <name type="scientific">Chlorella</name>
    <dbReference type="NCBI Taxonomy" id="3071"/>
</organismHost>
<name>P10_PBCV1</name>
<sequence length="289" mass="31194">MMNFILVLLIVAMIGTILVSESKYLFSKPVCKNCGVKAVTLPVDISAGKLAKVAEAVKKQTEEIKTLLKQKQSAPKAPELTNPIEHIKASTTVVSGANGLENVIDEDLPFSDFKGVPVAETTVEGMIKGIRPPTYADPRVMNPALAAAPVQFSDPTQFGTFGVTDDVSPAFSTEDKIPKTNAKISSDISVEGYENSYDANGARLVMDGKVVKSECQLPSYQIRNSKHHTQLPMRSLNEPPPMVEDLVDESLFEGLQGYPVDEKLDLLTPPGTATPSSEWAAINYGLTNN</sequence>
<protein>
    <recommendedName>
        <fullName>Minor capsid protein P10</fullName>
    </recommendedName>
</protein>
<comment type="function">
    <text evidence="2">One of the minor capsid proteins that constitute a network internal to the major capsid proteins and outside the lipid membrane (PubMed:30674888). The minor capsid proteins glue and stabilize the capsomers (PubMed:30674888).</text>
</comment>
<comment type="subunit">
    <text evidence="2">Interacts with the major capsid protein.</text>
</comment>
<comment type="subcellular location">
    <subcellularLocation>
        <location evidence="2">Virion</location>
    </subcellularLocation>
</comment>
<comment type="induction">
    <text evidence="1">Expressed in the early-late phase of the viral replicative cycle.</text>
</comment>
<comment type="domain">
    <text evidence="4">The hydrophobic region might anchor the protein in the underlying inner membrane.</text>
</comment>
<accession>Q98505</accession>
<evidence type="ECO:0000269" key="1">
    <source>
    </source>
</evidence>
<evidence type="ECO:0000269" key="2">
    <source>
    </source>
</evidence>
<evidence type="ECO:0000305" key="3"/>
<evidence type="ECO:0000305" key="4">
    <source>
    </source>
</evidence>
<evidence type="ECO:0000312" key="5">
    <source>
        <dbReference type="EMBL" id="AAC96822.1"/>
    </source>
</evidence>
<evidence type="ECO:0000312" key="6">
    <source>
        <dbReference type="Proteomes" id="UP000000862"/>
    </source>
</evidence>
<evidence type="ECO:0007744" key="7">
    <source>
        <dbReference type="PDB" id="6NCL"/>
    </source>
</evidence>
<keyword id="KW-0002">3D-structure</keyword>
<keyword id="KW-0167">Capsid protein</keyword>
<keyword id="KW-1015">Disulfide bond</keyword>
<keyword id="KW-0426">Late protein</keyword>
<keyword id="KW-1185">Reference proteome</keyword>
<keyword id="KW-0946">Virion</keyword>
<organism evidence="5 6">
    <name type="scientific">Paramecium bursaria Chlorella virus 1</name>
    <name type="common">PBCV-1</name>
    <dbReference type="NCBI Taxonomy" id="10506"/>
    <lineage>
        <taxon>Viruses</taxon>
        <taxon>Varidnaviria</taxon>
        <taxon>Bamfordvirae</taxon>
        <taxon>Nucleocytoviricota</taxon>
        <taxon>Megaviricetes</taxon>
        <taxon>Algavirales</taxon>
        <taxon>Phycodnaviridae</taxon>
        <taxon>Chlorovirus</taxon>
    </lineage>
</organism>